<feature type="chain" id="PRO_0000194539" description="MmsAB operon regulatory protein">
    <location>
        <begin position="1"/>
        <end position="307"/>
    </location>
</feature>
<feature type="domain" description="HTH araC/xylS-type" evidence="1">
    <location>
        <begin position="201"/>
        <end position="299"/>
    </location>
</feature>
<feature type="DNA-binding region" description="H-T-H motif" evidence="1">
    <location>
        <begin position="218"/>
        <end position="239"/>
    </location>
</feature>
<feature type="DNA-binding region" description="H-T-H motif" evidence="1">
    <location>
        <begin position="266"/>
        <end position="289"/>
    </location>
</feature>
<feature type="sequence conflict" description="In Ref. 1; AAA25890." evidence="4" ref="1">
    <original>S</original>
    <variation>T</variation>
    <location>
        <position position="129"/>
    </location>
</feature>
<comment type="function">
    <text evidence="2">Regulatory protein for the mmsAB operon. Activates the transcription of the mmsAB genes.</text>
</comment>
<keyword id="KW-0010">Activator</keyword>
<keyword id="KW-0238">DNA-binding</keyword>
<keyword id="KW-1185">Reference proteome</keyword>
<keyword id="KW-0804">Transcription</keyword>
<keyword id="KW-0805">Transcription regulation</keyword>
<gene>
    <name evidence="3" type="primary">mmsR</name>
    <name type="ordered locus">PA3571</name>
</gene>
<proteinExistence type="predicted"/>
<reference key="1">
    <citation type="journal article" date="1992" name="J. Biol. Chem.">
        <title>Characterization of the mmsAB operon of Pseudomonas aeruginosa PAO encoding methylmalonate-semialdehyde dehydrogenase and 3-hydroxyisobutyrate dehydrogenase.</title>
        <authorList>
            <person name="Steele M.I."/>
            <person name="Lorenz D."/>
            <person name="Hatter K."/>
            <person name="Park A."/>
            <person name="Sokatch J.R."/>
        </authorList>
    </citation>
    <scope>NUCLEOTIDE SEQUENCE [GENOMIC DNA]</scope>
    <scope>FUNCTION</scope>
    <source>
        <strain>ATCC 15692 / DSM 22644 / CIP 104116 / JCM 14847 / LMG 12228 / 1C / PRS 101 / PAO1</strain>
    </source>
</reference>
<reference key="2">
    <citation type="journal article" date="2000" name="Nature">
        <title>Complete genome sequence of Pseudomonas aeruginosa PAO1, an opportunistic pathogen.</title>
        <authorList>
            <person name="Stover C.K."/>
            <person name="Pham X.-Q.T."/>
            <person name="Erwin A.L."/>
            <person name="Mizoguchi S.D."/>
            <person name="Warrener P."/>
            <person name="Hickey M.J."/>
            <person name="Brinkman F.S.L."/>
            <person name="Hufnagle W.O."/>
            <person name="Kowalik D.J."/>
            <person name="Lagrou M."/>
            <person name="Garber R.L."/>
            <person name="Goltry L."/>
            <person name="Tolentino E."/>
            <person name="Westbrock-Wadman S."/>
            <person name="Yuan Y."/>
            <person name="Brody L.L."/>
            <person name="Coulter S.N."/>
            <person name="Folger K.R."/>
            <person name="Kas A."/>
            <person name="Larbig K."/>
            <person name="Lim R.M."/>
            <person name="Smith K.A."/>
            <person name="Spencer D.H."/>
            <person name="Wong G.K.-S."/>
            <person name="Wu Z."/>
            <person name="Paulsen I.T."/>
            <person name="Reizer J."/>
            <person name="Saier M.H. Jr."/>
            <person name="Hancock R.E.W."/>
            <person name="Lory S."/>
            <person name="Olson M.V."/>
        </authorList>
    </citation>
    <scope>NUCLEOTIDE SEQUENCE [LARGE SCALE GENOMIC DNA]</scope>
    <source>
        <strain>ATCC 15692 / DSM 22644 / CIP 104116 / JCM 14847 / LMG 12228 / 1C / PRS 101 / PAO1</strain>
    </source>
</reference>
<name>MMSR_PSEAE</name>
<protein>
    <recommendedName>
        <fullName evidence="4">MmsAB operon regulatory protein</fullName>
    </recommendedName>
</protein>
<evidence type="ECO:0000255" key="1">
    <source>
        <dbReference type="PROSITE-ProRule" id="PRU00593"/>
    </source>
</evidence>
<evidence type="ECO:0000269" key="2">
    <source>
    </source>
</evidence>
<evidence type="ECO:0000303" key="3">
    <source>
    </source>
</evidence>
<evidence type="ECO:0000305" key="4"/>
<organism>
    <name type="scientific">Pseudomonas aeruginosa (strain ATCC 15692 / DSM 22644 / CIP 104116 / JCM 14847 / LMG 12228 / 1C / PRS 101 / PAO1)</name>
    <dbReference type="NCBI Taxonomy" id="208964"/>
    <lineage>
        <taxon>Bacteria</taxon>
        <taxon>Pseudomonadati</taxon>
        <taxon>Pseudomonadota</taxon>
        <taxon>Gammaproteobacteria</taxon>
        <taxon>Pseudomonadales</taxon>
        <taxon>Pseudomonadaceae</taxon>
        <taxon>Pseudomonas</taxon>
    </lineage>
</organism>
<dbReference type="EMBL" id="M84911">
    <property type="protein sequence ID" value="AAA25890.1"/>
    <property type="molecule type" value="Genomic_DNA"/>
</dbReference>
<dbReference type="EMBL" id="AE004091">
    <property type="protein sequence ID" value="AAG06959.1"/>
    <property type="molecule type" value="Genomic_DNA"/>
</dbReference>
<dbReference type="PIR" id="A42902">
    <property type="entry name" value="A42902"/>
</dbReference>
<dbReference type="PIR" id="F83198">
    <property type="entry name" value="F83198"/>
</dbReference>
<dbReference type="RefSeq" id="NP_252261.1">
    <property type="nucleotide sequence ID" value="NC_002516.2"/>
</dbReference>
<dbReference type="RefSeq" id="WP_003122160.1">
    <property type="nucleotide sequence ID" value="NZ_QZGE01000001.1"/>
</dbReference>
<dbReference type="SMR" id="P28809"/>
<dbReference type="FunCoup" id="P28809">
    <property type="interactions" value="97"/>
</dbReference>
<dbReference type="STRING" id="208964.PA3571"/>
<dbReference type="PaxDb" id="208964-PA3571"/>
<dbReference type="GeneID" id="878815"/>
<dbReference type="KEGG" id="pae:PA3571"/>
<dbReference type="PATRIC" id="fig|208964.12.peg.3737"/>
<dbReference type="PseudoCAP" id="PA3571"/>
<dbReference type="HOGENOM" id="CLU_000445_88_6_6"/>
<dbReference type="InParanoid" id="P28809"/>
<dbReference type="OrthoDB" id="5622169at2"/>
<dbReference type="PhylomeDB" id="P28809"/>
<dbReference type="BioCyc" id="PAER208964:G1FZ6-3639-MONOMER"/>
<dbReference type="Proteomes" id="UP000002438">
    <property type="component" value="Chromosome"/>
</dbReference>
<dbReference type="GO" id="GO:0003700">
    <property type="term" value="F:DNA-binding transcription factor activity"/>
    <property type="evidence" value="ECO:0007669"/>
    <property type="project" value="InterPro"/>
</dbReference>
<dbReference type="GO" id="GO:0043565">
    <property type="term" value="F:sequence-specific DNA binding"/>
    <property type="evidence" value="ECO:0007669"/>
    <property type="project" value="InterPro"/>
</dbReference>
<dbReference type="GO" id="GO:2000284">
    <property type="term" value="P:positive regulation of amino acid biosynthetic process"/>
    <property type="evidence" value="ECO:0000315"/>
    <property type="project" value="PseudoCAP"/>
</dbReference>
<dbReference type="CDD" id="cd06986">
    <property type="entry name" value="cupin_MmsR-like_N"/>
    <property type="match status" value="1"/>
</dbReference>
<dbReference type="Gene3D" id="1.10.10.60">
    <property type="entry name" value="Homeodomain-like"/>
    <property type="match status" value="2"/>
</dbReference>
<dbReference type="Gene3D" id="2.60.120.280">
    <property type="entry name" value="Regulatory protein AraC"/>
    <property type="match status" value="1"/>
</dbReference>
<dbReference type="InterPro" id="IPR003313">
    <property type="entry name" value="AraC-bd"/>
</dbReference>
<dbReference type="InterPro" id="IPR009057">
    <property type="entry name" value="Homeodomain-like_sf"/>
</dbReference>
<dbReference type="InterPro" id="IPR037923">
    <property type="entry name" value="HTH-like"/>
</dbReference>
<dbReference type="InterPro" id="IPR018060">
    <property type="entry name" value="HTH_AraC"/>
</dbReference>
<dbReference type="InterPro" id="IPR018062">
    <property type="entry name" value="HTH_AraC-typ_CS"/>
</dbReference>
<dbReference type="InterPro" id="IPR020449">
    <property type="entry name" value="Tscrpt_reg_AraC-type_HTH"/>
</dbReference>
<dbReference type="PANTHER" id="PTHR43280">
    <property type="entry name" value="ARAC-FAMILY TRANSCRIPTIONAL REGULATOR"/>
    <property type="match status" value="1"/>
</dbReference>
<dbReference type="PANTHER" id="PTHR43280:SF30">
    <property type="entry name" value="MMSAB OPERON REGULATORY PROTEIN"/>
    <property type="match status" value="1"/>
</dbReference>
<dbReference type="Pfam" id="PF02311">
    <property type="entry name" value="AraC_binding"/>
    <property type="match status" value="1"/>
</dbReference>
<dbReference type="Pfam" id="PF12833">
    <property type="entry name" value="HTH_18"/>
    <property type="match status" value="1"/>
</dbReference>
<dbReference type="PRINTS" id="PR00032">
    <property type="entry name" value="HTHARAC"/>
</dbReference>
<dbReference type="SMART" id="SM00342">
    <property type="entry name" value="HTH_ARAC"/>
    <property type="match status" value="1"/>
</dbReference>
<dbReference type="SUPFAM" id="SSF46689">
    <property type="entry name" value="Homeodomain-like"/>
    <property type="match status" value="2"/>
</dbReference>
<dbReference type="SUPFAM" id="SSF51215">
    <property type="entry name" value="Regulatory protein AraC"/>
    <property type="match status" value="1"/>
</dbReference>
<dbReference type="PROSITE" id="PS00041">
    <property type="entry name" value="HTH_ARAC_FAMILY_1"/>
    <property type="match status" value="1"/>
</dbReference>
<dbReference type="PROSITE" id="PS01124">
    <property type="entry name" value="HTH_ARAC_FAMILY_2"/>
    <property type="match status" value="1"/>
</dbReference>
<sequence length="307" mass="35379">MDYIAEPATDMSHTSDWPLPADSLRLPIPAALLEKLAVHPLSRDLYPTSLGHYRRARDHRMSRERHDEHLLIYCSEGQGLLRVREGEAWREYRVGSGDLLWLPPGMAHDYAADDRQPWTIFWTHLRGDSATWLQHSAGYRDTPLRHWGLQHALLGGFEQLLEVRHSGYRFQHFLLAASRLRSLLCQLPLLRPLREGSLDLDGLHAYMREHLHARLELERLAAFCNLSKFHFVSRYKAITGRTPIQHFLHLKIEYACQLLDSSDQSVARVGQAVGYDDSYYFSRLFSKVMGLSPSAYRQRVRQGEGGA</sequence>
<accession>P28809</accession>